<reference key="1">
    <citation type="journal article" date="1996" name="Science">
        <title>Complete genome sequence of the methanogenic archaeon, Methanococcus jannaschii.</title>
        <authorList>
            <person name="Bult C.J."/>
            <person name="White O."/>
            <person name="Olsen G.J."/>
            <person name="Zhou L."/>
            <person name="Fleischmann R.D."/>
            <person name="Sutton G.G."/>
            <person name="Blake J.A."/>
            <person name="FitzGerald L.M."/>
            <person name="Clayton R.A."/>
            <person name="Gocayne J.D."/>
            <person name="Kerlavage A.R."/>
            <person name="Dougherty B.A."/>
            <person name="Tomb J.-F."/>
            <person name="Adams M.D."/>
            <person name="Reich C.I."/>
            <person name="Overbeek R."/>
            <person name="Kirkness E.F."/>
            <person name="Weinstock K.G."/>
            <person name="Merrick J.M."/>
            <person name="Glodek A."/>
            <person name="Scott J.L."/>
            <person name="Geoghagen N.S.M."/>
            <person name="Weidman J.F."/>
            <person name="Fuhrmann J.L."/>
            <person name="Nguyen D."/>
            <person name="Utterback T.R."/>
            <person name="Kelley J.M."/>
            <person name="Peterson J.D."/>
            <person name="Sadow P.W."/>
            <person name="Hanna M.C."/>
            <person name="Cotton M.D."/>
            <person name="Roberts K.M."/>
            <person name="Hurst M.A."/>
            <person name="Kaine B.P."/>
            <person name="Borodovsky M."/>
            <person name="Klenk H.-P."/>
            <person name="Fraser C.M."/>
            <person name="Smith H.O."/>
            <person name="Woese C.R."/>
            <person name="Venter J.C."/>
        </authorList>
    </citation>
    <scope>NUCLEOTIDE SEQUENCE [LARGE SCALE GENOMIC DNA]</scope>
    <source>
        <strain>ATCC 43067 / DSM 2661 / JAL-1 / JCM 10045 / NBRC 100440</strain>
    </source>
</reference>
<organism>
    <name type="scientific">Methanocaldococcus jannaschii (strain ATCC 43067 / DSM 2661 / JAL-1 / JCM 10045 / NBRC 100440)</name>
    <name type="common">Methanococcus jannaschii</name>
    <dbReference type="NCBI Taxonomy" id="243232"/>
    <lineage>
        <taxon>Archaea</taxon>
        <taxon>Methanobacteriati</taxon>
        <taxon>Methanobacteriota</taxon>
        <taxon>Methanomada group</taxon>
        <taxon>Methanococci</taxon>
        <taxon>Methanococcales</taxon>
        <taxon>Methanocaldococcaceae</taxon>
        <taxon>Methanocaldococcus</taxon>
    </lineage>
</organism>
<comment type="function">
    <text evidence="3">Catalyzes the four-electron oxidation of UDP-N-acetyl-D-mannosamine (UDP-ManNAc), reducing NAD(+) and releasing UDP-N-acetylmannosaminuronic acid (UDP-ManNAcA).</text>
</comment>
<comment type="catalytic activity">
    <reaction evidence="3">
        <text>UDP-N-acetyl-alpha-D-mannosamine + 2 NAD(+) + H2O = UDP-N-acetyl-alpha-D-mannosaminouronate + 2 NADH + 3 H(+)</text>
        <dbReference type="Rhea" id="RHEA:25780"/>
        <dbReference type="ChEBI" id="CHEBI:15377"/>
        <dbReference type="ChEBI" id="CHEBI:15378"/>
        <dbReference type="ChEBI" id="CHEBI:57540"/>
        <dbReference type="ChEBI" id="CHEBI:57945"/>
        <dbReference type="ChEBI" id="CHEBI:68623"/>
        <dbReference type="ChEBI" id="CHEBI:70731"/>
        <dbReference type="EC" id="1.1.1.336"/>
    </reaction>
</comment>
<comment type="subunit">
    <text evidence="3">Homotetramer; probably dimer of dimers.</text>
</comment>
<comment type="similarity">
    <text evidence="4">Belongs to the UDP-glucose/GDP-mannose dehydrogenase family.</text>
</comment>
<keyword id="KW-0520">NAD</keyword>
<keyword id="KW-0560">Oxidoreductase</keyword>
<keyword id="KW-1185">Reference proteome</keyword>
<dbReference type="EC" id="1.1.1.336" evidence="3"/>
<dbReference type="EMBL" id="L77117">
    <property type="protein sequence ID" value="AAB98413.1"/>
    <property type="molecule type" value="Genomic_DNA"/>
</dbReference>
<dbReference type="PIR" id="D64353">
    <property type="entry name" value="D64353"/>
</dbReference>
<dbReference type="RefSeq" id="WP_010869927.1">
    <property type="nucleotide sequence ID" value="NC_000909.1"/>
</dbReference>
<dbReference type="SMR" id="Q57871"/>
<dbReference type="FunCoup" id="Q57871">
    <property type="interactions" value="43"/>
</dbReference>
<dbReference type="STRING" id="243232.MJ_0428"/>
<dbReference type="PaxDb" id="243232-MJ_0428"/>
<dbReference type="EnsemblBacteria" id="AAB98413">
    <property type="protein sequence ID" value="AAB98413"/>
    <property type="gene ID" value="MJ_0428"/>
</dbReference>
<dbReference type="GeneID" id="1451288"/>
<dbReference type="KEGG" id="mja:MJ_0428"/>
<dbReference type="eggNOG" id="arCOG00252">
    <property type="taxonomic scope" value="Archaea"/>
</dbReference>
<dbReference type="HOGENOM" id="CLU_023810_3_2_2"/>
<dbReference type="InParanoid" id="Q57871"/>
<dbReference type="OrthoDB" id="372050at2157"/>
<dbReference type="PhylomeDB" id="Q57871"/>
<dbReference type="Proteomes" id="UP000000805">
    <property type="component" value="Chromosome"/>
</dbReference>
<dbReference type="GO" id="GO:0051287">
    <property type="term" value="F:NAD binding"/>
    <property type="evidence" value="ECO:0007669"/>
    <property type="project" value="InterPro"/>
</dbReference>
<dbReference type="GO" id="GO:0016628">
    <property type="term" value="F:oxidoreductase activity, acting on the CH-CH group of donors, NAD or NADP as acceptor"/>
    <property type="evidence" value="ECO:0007669"/>
    <property type="project" value="InterPro"/>
</dbReference>
<dbReference type="GO" id="GO:0089714">
    <property type="term" value="F:UDP-N-acetyl-D-mannosamine dehydrogenase activity"/>
    <property type="evidence" value="ECO:0007669"/>
    <property type="project" value="UniProtKB-EC"/>
</dbReference>
<dbReference type="GO" id="GO:0000271">
    <property type="term" value="P:polysaccharide biosynthetic process"/>
    <property type="evidence" value="ECO:0007669"/>
    <property type="project" value="InterPro"/>
</dbReference>
<dbReference type="Gene3D" id="3.40.50.720">
    <property type="entry name" value="NAD(P)-binding Rossmann-like Domain"/>
    <property type="match status" value="2"/>
</dbReference>
<dbReference type="InterPro" id="IPR008927">
    <property type="entry name" value="6-PGluconate_DH-like_C_sf"/>
</dbReference>
<dbReference type="InterPro" id="IPR036291">
    <property type="entry name" value="NAD(P)-bd_dom_sf"/>
</dbReference>
<dbReference type="InterPro" id="IPR017476">
    <property type="entry name" value="UDP-Glc/GDP-Man"/>
</dbReference>
<dbReference type="InterPro" id="IPR014027">
    <property type="entry name" value="UDP-Glc/GDP-Man_DH_C"/>
</dbReference>
<dbReference type="InterPro" id="IPR036220">
    <property type="entry name" value="UDP-Glc/GDP-Man_DH_C_sf"/>
</dbReference>
<dbReference type="InterPro" id="IPR014026">
    <property type="entry name" value="UDP-Glc/GDP-Man_DH_dimer"/>
</dbReference>
<dbReference type="InterPro" id="IPR001732">
    <property type="entry name" value="UDP-Glc/GDP-Man_DH_N"/>
</dbReference>
<dbReference type="InterPro" id="IPR028359">
    <property type="entry name" value="UDP_ManNAc/GlcNAc_DH"/>
</dbReference>
<dbReference type="NCBIfam" id="TIGR03026">
    <property type="entry name" value="NDP-sugDHase"/>
    <property type="match status" value="1"/>
</dbReference>
<dbReference type="PANTHER" id="PTHR43491">
    <property type="entry name" value="UDP-N-ACETYL-D-MANNOSAMINE DEHYDROGENASE"/>
    <property type="match status" value="1"/>
</dbReference>
<dbReference type="PANTHER" id="PTHR43491:SF2">
    <property type="entry name" value="UDP-N-ACETYL-D-MANNOSAMINE DEHYDROGENASE"/>
    <property type="match status" value="1"/>
</dbReference>
<dbReference type="Pfam" id="PF00984">
    <property type="entry name" value="UDPG_MGDP_dh"/>
    <property type="match status" value="1"/>
</dbReference>
<dbReference type="Pfam" id="PF03720">
    <property type="entry name" value="UDPG_MGDP_dh_C"/>
    <property type="match status" value="1"/>
</dbReference>
<dbReference type="Pfam" id="PF03721">
    <property type="entry name" value="UDPG_MGDP_dh_N"/>
    <property type="match status" value="1"/>
</dbReference>
<dbReference type="PIRSF" id="PIRSF500136">
    <property type="entry name" value="UDP_ManNAc_DH"/>
    <property type="match status" value="1"/>
</dbReference>
<dbReference type="PIRSF" id="PIRSF000124">
    <property type="entry name" value="UDPglc_GDPman_dh"/>
    <property type="match status" value="1"/>
</dbReference>
<dbReference type="SMART" id="SM00984">
    <property type="entry name" value="UDPG_MGDP_dh_C"/>
    <property type="match status" value="1"/>
</dbReference>
<dbReference type="SUPFAM" id="SSF48179">
    <property type="entry name" value="6-phosphogluconate dehydrogenase C-terminal domain-like"/>
    <property type="match status" value="1"/>
</dbReference>
<dbReference type="SUPFAM" id="SSF51735">
    <property type="entry name" value="NAD(P)-binding Rossmann-fold domains"/>
    <property type="match status" value="1"/>
</dbReference>
<dbReference type="SUPFAM" id="SSF52413">
    <property type="entry name" value="UDP-glucose/GDP-mannose dehydrogenase C-terminal domain"/>
    <property type="match status" value="1"/>
</dbReference>
<protein>
    <recommendedName>
        <fullName>UDP-N-acetyl-D-mannosamine dehydrogenase</fullName>
        <ecNumber evidence="3">1.1.1.336</ecNumber>
    </recommendedName>
    <alternativeName>
        <fullName>UDP-ManNAc 6-dehydrogenase</fullName>
    </alternativeName>
</protein>
<feature type="chain" id="PRO_0000074083" description="UDP-N-acetyl-D-mannosamine dehydrogenase">
    <location>
        <begin position="1"/>
        <end position="427"/>
    </location>
</feature>
<feature type="active site" description="Proton donor/acceptor" evidence="1">
    <location>
        <position position="209"/>
    </location>
</feature>
<feature type="active site" description="Nucleophile" evidence="1">
    <location>
        <position position="263"/>
    </location>
</feature>
<feature type="binding site" description="in chain A" evidence="2">
    <location>
        <position position="20"/>
    </location>
    <ligand>
        <name>NAD(+)</name>
        <dbReference type="ChEBI" id="CHEBI:57540"/>
        <note>ligand shared between homodimeric partners</note>
    </ligand>
</feature>
<feature type="binding site" description="in chain A" evidence="2">
    <location>
        <position position="21"/>
    </location>
    <ligand>
        <name>NAD(+)</name>
        <dbReference type="ChEBI" id="CHEBI:57540"/>
        <note>ligand shared between homodimeric partners</note>
    </ligand>
</feature>
<feature type="binding site" description="in chain A" evidence="2">
    <location>
        <position position="40"/>
    </location>
    <ligand>
        <name>NAD(+)</name>
        <dbReference type="ChEBI" id="CHEBI:57540"/>
        <note>ligand shared between homodimeric partners</note>
    </ligand>
</feature>
<feature type="binding site" description="in chain A" evidence="2">
    <location>
        <position position="45"/>
    </location>
    <ligand>
        <name>NAD(+)</name>
        <dbReference type="ChEBI" id="CHEBI:57540"/>
        <note>ligand shared between homodimeric partners</note>
    </ligand>
</feature>
<feature type="binding site" description="in chain A" evidence="2">
    <location>
        <position position="92"/>
    </location>
    <ligand>
        <name>NAD(+)</name>
        <dbReference type="ChEBI" id="CHEBI:57540"/>
        <note>ligand shared between homodimeric partners</note>
    </ligand>
</feature>
<feature type="binding site" description="in chain A" evidence="2">
    <location>
        <position position="130"/>
    </location>
    <ligand>
        <name>NAD(+)</name>
        <dbReference type="ChEBI" id="CHEBI:57540"/>
        <note>ligand shared between homodimeric partners</note>
    </ligand>
</feature>
<feature type="binding site" description="in chain A" evidence="1">
    <location>
        <position position="157"/>
    </location>
    <ligand>
        <name>UDP-N-acetyl-alpha-D-mannosaminouronate</name>
        <dbReference type="ChEBI" id="CHEBI:70731"/>
        <note>ligand shared between homodimeric partners</note>
    </ligand>
</feature>
<feature type="binding site" description="in chain A" evidence="1">
    <location>
        <position position="158"/>
    </location>
    <ligand>
        <name>UDP-N-acetyl-alpha-D-mannosaminouronate</name>
        <dbReference type="ChEBI" id="CHEBI:70731"/>
        <note>ligand shared between homodimeric partners</note>
    </ligand>
</feature>
<feature type="binding site" description="in chain A" evidence="1">
    <location>
        <position position="209"/>
    </location>
    <ligand>
        <name>UDP-N-acetyl-alpha-D-mannosaminouronate</name>
        <dbReference type="ChEBI" id="CHEBI:70731"/>
        <note>ligand shared between homodimeric partners</note>
    </ligand>
</feature>
<feature type="binding site" description="in chain A" evidence="1">
    <location>
        <position position="213"/>
    </location>
    <ligand>
        <name>UDP-N-acetyl-alpha-D-mannosaminouronate</name>
        <dbReference type="ChEBI" id="CHEBI:70731"/>
        <note>ligand shared between homodimeric partners</note>
    </ligand>
</feature>
<feature type="binding site" description="in chain A" evidence="1">
    <location>
        <position position="216"/>
    </location>
    <ligand>
        <name>UDP-N-acetyl-alpha-D-mannosaminouronate</name>
        <dbReference type="ChEBI" id="CHEBI:70731"/>
        <note>ligand shared between homodimeric partners</note>
    </ligand>
</feature>
<feature type="binding site" description="in chain B" evidence="1">
    <location>
        <position position="247"/>
    </location>
    <ligand>
        <name>UDP-N-acetyl-alpha-D-mannosaminouronate</name>
        <dbReference type="ChEBI" id="CHEBI:70731"/>
        <note>ligand shared between homodimeric partners</note>
    </ligand>
</feature>
<feature type="binding site" description="in chain B" evidence="1">
    <location>
        <position position="249"/>
    </location>
    <ligand>
        <name>UDP-N-acetyl-alpha-D-mannosaminouronate</name>
        <dbReference type="ChEBI" id="CHEBI:70731"/>
        <note>ligand shared between homodimeric partners</note>
    </ligand>
</feature>
<feature type="binding site" description="in chain A" evidence="1">
    <location>
        <position position="260"/>
    </location>
    <ligand>
        <name>UDP-N-acetyl-alpha-D-mannosaminouronate</name>
        <dbReference type="ChEBI" id="CHEBI:70731"/>
        <note>ligand shared between homodimeric partners</note>
    </ligand>
</feature>
<feature type="binding site" description="in chain A" evidence="1">
    <location>
        <position position="317"/>
    </location>
    <ligand>
        <name>UDP-N-acetyl-alpha-D-mannosaminouronate</name>
        <dbReference type="ChEBI" id="CHEBI:70731"/>
        <note>ligand shared between homodimeric partners</note>
    </ligand>
</feature>
<feature type="binding site" description="in chain A" evidence="1">
    <location>
        <position position="318"/>
    </location>
    <ligand>
        <name>UDP-N-acetyl-alpha-D-mannosaminouronate</name>
        <dbReference type="ChEBI" id="CHEBI:70731"/>
        <note>ligand shared between homodimeric partners</note>
    </ligand>
</feature>
<feature type="binding site" description="in chain B" evidence="2">
    <location>
        <position position="325"/>
    </location>
    <ligand>
        <name>NAD(+)</name>
        <dbReference type="ChEBI" id="CHEBI:57540"/>
        <note>ligand shared between homodimeric partners</note>
    </ligand>
</feature>
<feature type="binding site" description="in chain A" evidence="1">
    <location>
        <position position="403"/>
    </location>
    <ligand>
        <name>UDP-N-acetyl-alpha-D-mannosaminouronate</name>
        <dbReference type="ChEBI" id="CHEBI:70731"/>
        <note>ligand shared between homodimeric partners</note>
    </ligand>
</feature>
<evidence type="ECO:0000250" key="1">
    <source>
        <dbReference type="UniProtKB" id="O59284"/>
    </source>
</evidence>
<evidence type="ECO:0000250" key="2">
    <source>
        <dbReference type="UniProtKB" id="P11759"/>
    </source>
</evidence>
<evidence type="ECO:0000250" key="3">
    <source>
        <dbReference type="UniProtKB" id="Q6LZC3"/>
    </source>
</evidence>
<evidence type="ECO:0000305" key="4"/>
<sequence length="427" mass="47749">MTKVEKNGIGKRICVIGLGYIGLPTASMLAIQGFDVIGVDINEKRVKEIKELSFKTTEKDLMTLVKGAINSGNLKVQTKPEKADVFIICVPTPCIECDGEKKCDLTYLNKAIESIKPYLENGNLIIIESTIPPGTTDDIYKKLSKDKKIYVAHCPERVLPGSILKELVENDRVIGGVDEKSAEMAKEIYETFVTGKIYLTDAKTAEMVKLMENTYRDVNIALANEFAKIAEEIGINVWEAIELANKHPRVNILKPGPGVGGHCISIDPWFIVEKSKNAKLIRTARELNDSMPLFVVEKIKKIIKKDIGKVAIFGVTYKGNVDDTRESPAEKVVSKLIDEGFEVKCYDKYARDFIYPLNSLDEAVEGADIIVILAEHDEYKNFDKEDIKNIASKVKNKIILDTKNILNRELWEKEGFKVYVLGDGKNA</sequence>
<proteinExistence type="inferred from homology"/>
<accession>Q57871</accession>
<name>WECC_METJA</name>
<gene>
    <name type="primary">wecC</name>
    <name type="ordered locus">MJ0428</name>
</gene>